<reference key="1">
    <citation type="journal article" date="2004" name="Nucleic Acids Res.">
        <title>Comparative analysis of the Borrelia garinii genome.</title>
        <authorList>
            <person name="Gloeckner G."/>
            <person name="Lehmann R."/>
            <person name="Romualdi A."/>
            <person name="Pradella S."/>
            <person name="Schulte-Spechtel U."/>
            <person name="Schilhabel M."/>
            <person name="Wilske B."/>
            <person name="Suehnel J."/>
            <person name="Platzer M."/>
        </authorList>
    </citation>
    <scope>NUCLEOTIDE SEQUENCE [LARGE SCALE GENOMIC DNA]</scope>
    <source>
        <strain>ATCC BAA-2496 / DSM 23469 / PBi</strain>
    </source>
</reference>
<organism>
    <name type="scientific">Borrelia garinii subsp. bavariensis (strain ATCC BAA-2496 / DSM 23469 / PBi)</name>
    <name type="common">Borreliella bavariensis</name>
    <dbReference type="NCBI Taxonomy" id="290434"/>
    <lineage>
        <taxon>Bacteria</taxon>
        <taxon>Pseudomonadati</taxon>
        <taxon>Spirochaetota</taxon>
        <taxon>Spirochaetia</taxon>
        <taxon>Spirochaetales</taxon>
        <taxon>Borreliaceae</taxon>
        <taxon>Borreliella</taxon>
    </lineage>
</organism>
<name>SYP_BORGP</name>
<accession>Q661L6</accession>
<gene>
    <name evidence="1" type="primary">proS</name>
    <name type="ordered locus">BG0405</name>
</gene>
<comment type="function">
    <text evidence="1">Catalyzes the attachment of proline to tRNA(Pro) in a two-step reaction: proline is first activated by ATP to form Pro-AMP and then transferred to the acceptor end of tRNA(Pro).</text>
</comment>
<comment type="catalytic activity">
    <reaction evidence="1">
        <text>tRNA(Pro) + L-proline + ATP = L-prolyl-tRNA(Pro) + AMP + diphosphate</text>
        <dbReference type="Rhea" id="RHEA:14305"/>
        <dbReference type="Rhea" id="RHEA-COMP:9700"/>
        <dbReference type="Rhea" id="RHEA-COMP:9702"/>
        <dbReference type="ChEBI" id="CHEBI:30616"/>
        <dbReference type="ChEBI" id="CHEBI:33019"/>
        <dbReference type="ChEBI" id="CHEBI:60039"/>
        <dbReference type="ChEBI" id="CHEBI:78442"/>
        <dbReference type="ChEBI" id="CHEBI:78532"/>
        <dbReference type="ChEBI" id="CHEBI:456215"/>
        <dbReference type="EC" id="6.1.1.15"/>
    </reaction>
</comment>
<comment type="subunit">
    <text evidence="1">Homodimer.</text>
</comment>
<comment type="subcellular location">
    <subcellularLocation>
        <location evidence="1">Cytoplasm</location>
    </subcellularLocation>
</comment>
<comment type="domain">
    <text evidence="1">Consists of three domains: the N-terminal catalytic domain, the anticodon-binding domain and the C-terminal extension.</text>
</comment>
<comment type="similarity">
    <text evidence="1">Belongs to the class-II aminoacyl-tRNA synthetase family. ProS type 3 subfamily.</text>
</comment>
<evidence type="ECO:0000255" key="1">
    <source>
        <dbReference type="HAMAP-Rule" id="MF_01571"/>
    </source>
</evidence>
<protein>
    <recommendedName>
        <fullName evidence="1">Proline--tRNA ligase</fullName>
        <ecNumber evidence="1">6.1.1.15</ecNumber>
    </recommendedName>
    <alternativeName>
        <fullName evidence="1">Prolyl-tRNA synthetase</fullName>
        <shortName evidence="1">ProRS</shortName>
    </alternativeName>
</protein>
<feature type="chain" id="PRO_0000249125" description="Proline--tRNA ligase">
    <location>
        <begin position="1"/>
        <end position="488"/>
    </location>
</feature>
<sequence>MSDFIASKEDDYSKWYLDIVQKAKLADYSPVKGCMVIMPYGYSIWSKIQSILDKKFKETGHENAYFPMLIPYGFLEKEKDHIEGFSPEFAIIKDAGGESLAEPLVLRPTSETIIWNMYSKWIKSYRDLPLKINQWANVVRWEKRTRPFLRTTEFLWQEGHTAHATEEEAVEETLLILDLYKRFMEDYLAIPVFCGKKSEKEKFAGAVSTYSIEALMQDKKALQAATSHYLGLNFAKAFDVKFQDKDGKMRHVFASSWGISTRLIGALIMVHSDEKGLILPPRIAPIEIIVIPIFKKEDEINKKILDYSDCVVHALKKAEFRVEIDKDVRSSPGFRFSSAEFKGIPIRIEVGINDVLLNSVTIMRRDKDRKFKYQISLDSLASKVKVELDSMQKDLFKKALNFRTLNTKEIFRIGKDSYELFKAYMNDHSGFVLSCWCGGLDCENIIKNETKATIRCIPDDFKAKDLTGMACIYCASRAKYFVLFAKSY</sequence>
<keyword id="KW-0030">Aminoacyl-tRNA synthetase</keyword>
<keyword id="KW-0067">ATP-binding</keyword>
<keyword id="KW-0963">Cytoplasm</keyword>
<keyword id="KW-0436">Ligase</keyword>
<keyword id="KW-0547">Nucleotide-binding</keyword>
<keyword id="KW-0648">Protein biosynthesis</keyword>
<dbReference type="EC" id="6.1.1.15" evidence="1"/>
<dbReference type="EMBL" id="CP000013">
    <property type="protein sequence ID" value="AAU07255.1"/>
    <property type="molecule type" value="Genomic_DNA"/>
</dbReference>
<dbReference type="RefSeq" id="WP_011193727.1">
    <property type="nucleotide sequence ID" value="NZ_CP028872.1"/>
</dbReference>
<dbReference type="SMR" id="Q661L6"/>
<dbReference type="GeneID" id="45161192"/>
<dbReference type="KEGG" id="bga:BG0405"/>
<dbReference type="eggNOG" id="COG0441">
    <property type="taxonomic scope" value="Bacteria"/>
</dbReference>
<dbReference type="HOGENOM" id="CLU_001882_4_2_12"/>
<dbReference type="OrthoDB" id="9809052at2"/>
<dbReference type="Proteomes" id="UP000002276">
    <property type="component" value="Chromosome"/>
</dbReference>
<dbReference type="GO" id="GO:0017101">
    <property type="term" value="C:aminoacyl-tRNA synthetase multienzyme complex"/>
    <property type="evidence" value="ECO:0007669"/>
    <property type="project" value="TreeGrafter"/>
</dbReference>
<dbReference type="GO" id="GO:0005737">
    <property type="term" value="C:cytoplasm"/>
    <property type="evidence" value="ECO:0007669"/>
    <property type="project" value="UniProtKB-SubCell"/>
</dbReference>
<dbReference type="GO" id="GO:0005524">
    <property type="term" value="F:ATP binding"/>
    <property type="evidence" value="ECO:0007669"/>
    <property type="project" value="UniProtKB-UniRule"/>
</dbReference>
<dbReference type="GO" id="GO:0004827">
    <property type="term" value="F:proline-tRNA ligase activity"/>
    <property type="evidence" value="ECO:0007669"/>
    <property type="project" value="UniProtKB-UniRule"/>
</dbReference>
<dbReference type="GO" id="GO:0006433">
    <property type="term" value="P:prolyl-tRNA aminoacylation"/>
    <property type="evidence" value="ECO:0007669"/>
    <property type="project" value="UniProtKB-UniRule"/>
</dbReference>
<dbReference type="CDD" id="cd00862">
    <property type="entry name" value="ProRS_anticodon_zinc"/>
    <property type="match status" value="1"/>
</dbReference>
<dbReference type="CDD" id="cd00778">
    <property type="entry name" value="ProRS_core_arch_euk"/>
    <property type="match status" value="1"/>
</dbReference>
<dbReference type="FunFam" id="3.30.930.10:FF:000023">
    <property type="entry name" value="Proline--tRNA ligase"/>
    <property type="match status" value="1"/>
</dbReference>
<dbReference type="Gene3D" id="3.40.50.800">
    <property type="entry name" value="Anticodon-binding domain"/>
    <property type="match status" value="1"/>
</dbReference>
<dbReference type="Gene3D" id="3.30.930.10">
    <property type="entry name" value="Bira Bifunctional Protein, Domain 2"/>
    <property type="match status" value="1"/>
</dbReference>
<dbReference type="Gene3D" id="3.30.110.30">
    <property type="entry name" value="C-terminal domain of ProRS"/>
    <property type="match status" value="1"/>
</dbReference>
<dbReference type="HAMAP" id="MF_01571">
    <property type="entry name" value="Pro_tRNA_synth_type3"/>
    <property type="match status" value="1"/>
</dbReference>
<dbReference type="InterPro" id="IPR002314">
    <property type="entry name" value="aa-tRNA-synt_IIb"/>
</dbReference>
<dbReference type="InterPro" id="IPR006195">
    <property type="entry name" value="aa-tRNA-synth_II"/>
</dbReference>
<dbReference type="InterPro" id="IPR045864">
    <property type="entry name" value="aa-tRNA-synth_II/BPL/LPL"/>
</dbReference>
<dbReference type="InterPro" id="IPR004154">
    <property type="entry name" value="Anticodon-bd"/>
</dbReference>
<dbReference type="InterPro" id="IPR036621">
    <property type="entry name" value="Anticodon-bd_dom_sf"/>
</dbReference>
<dbReference type="InterPro" id="IPR002316">
    <property type="entry name" value="Pro-tRNA-ligase_IIa"/>
</dbReference>
<dbReference type="InterPro" id="IPR004499">
    <property type="entry name" value="Pro-tRNA-ligase_IIa_arc-type"/>
</dbReference>
<dbReference type="InterPro" id="IPR016061">
    <property type="entry name" value="Pro-tRNA_ligase_II_C"/>
</dbReference>
<dbReference type="InterPro" id="IPR017449">
    <property type="entry name" value="Pro-tRNA_synth_II"/>
</dbReference>
<dbReference type="InterPro" id="IPR033721">
    <property type="entry name" value="ProRS_core_arch_euk"/>
</dbReference>
<dbReference type="NCBIfam" id="TIGR00408">
    <property type="entry name" value="proS_fam_I"/>
    <property type="match status" value="1"/>
</dbReference>
<dbReference type="PANTHER" id="PTHR43382:SF2">
    <property type="entry name" value="BIFUNCTIONAL GLUTAMATE_PROLINE--TRNA LIGASE"/>
    <property type="match status" value="1"/>
</dbReference>
<dbReference type="PANTHER" id="PTHR43382">
    <property type="entry name" value="PROLYL-TRNA SYNTHETASE"/>
    <property type="match status" value="1"/>
</dbReference>
<dbReference type="Pfam" id="PF03129">
    <property type="entry name" value="HGTP_anticodon"/>
    <property type="match status" value="1"/>
</dbReference>
<dbReference type="Pfam" id="PF09180">
    <property type="entry name" value="ProRS-C_1"/>
    <property type="match status" value="1"/>
</dbReference>
<dbReference type="Pfam" id="PF00587">
    <property type="entry name" value="tRNA-synt_2b"/>
    <property type="match status" value="1"/>
</dbReference>
<dbReference type="PRINTS" id="PR01046">
    <property type="entry name" value="TRNASYNTHPRO"/>
</dbReference>
<dbReference type="SMART" id="SM00946">
    <property type="entry name" value="ProRS-C_1"/>
    <property type="match status" value="1"/>
</dbReference>
<dbReference type="SUPFAM" id="SSF64586">
    <property type="entry name" value="C-terminal domain of ProRS"/>
    <property type="match status" value="1"/>
</dbReference>
<dbReference type="SUPFAM" id="SSF52954">
    <property type="entry name" value="Class II aaRS ABD-related"/>
    <property type="match status" value="1"/>
</dbReference>
<dbReference type="SUPFAM" id="SSF55681">
    <property type="entry name" value="Class II aaRS and biotin synthetases"/>
    <property type="match status" value="1"/>
</dbReference>
<dbReference type="PROSITE" id="PS50862">
    <property type="entry name" value="AA_TRNA_LIGASE_II"/>
    <property type="match status" value="1"/>
</dbReference>
<proteinExistence type="inferred from homology"/>